<gene>
    <name evidence="1" type="primary">speE</name>
    <name type="ordered locus">XCV4039</name>
</gene>
<name>SPEE_XANE5</name>
<organism>
    <name type="scientific">Xanthomonas euvesicatoria pv. vesicatoria (strain 85-10)</name>
    <name type="common">Xanthomonas campestris pv. vesicatoria</name>
    <dbReference type="NCBI Taxonomy" id="316273"/>
    <lineage>
        <taxon>Bacteria</taxon>
        <taxon>Pseudomonadati</taxon>
        <taxon>Pseudomonadota</taxon>
        <taxon>Gammaproteobacteria</taxon>
        <taxon>Lysobacterales</taxon>
        <taxon>Lysobacteraceae</taxon>
        <taxon>Xanthomonas</taxon>
    </lineage>
</organism>
<evidence type="ECO:0000255" key="1">
    <source>
        <dbReference type="HAMAP-Rule" id="MF_00198"/>
    </source>
</evidence>
<feature type="chain" id="PRO_1000012029" description="Polyamine aminopropyltransferase">
    <location>
        <begin position="1"/>
        <end position="285"/>
    </location>
</feature>
<feature type="domain" description="PABS" evidence="1">
    <location>
        <begin position="5"/>
        <end position="241"/>
    </location>
</feature>
<feature type="active site" description="Proton acceptor" evidence="1">
    <location>
        <position position="160"/>
    </location>
</feature>
<feature type="binding site" evidence="1">
    <location>
        <position position="35"/>
    </location>
    <ligand>
        <name>S-methyl-5'-thioadenosine</name>
        <dbReference type="ChEBI" id="CHEBI:17509"/>
    </ligand>
</feature>
<feature type="binding site" evidence="1">
    <location>
        <position position="66"/>
    </location>
    <ligand>
        <name>spermidine</name>
        <dbReference type="ChEBI" id="CHEBI:57834"/>
    </ligand>
</feature>
<feature type="binding site" evidence="1">
    <location>
        <position position="90"/>
    </location>
    <ligand>
        <name>spermidine</name>
        <dbReference type="ChEBI" id="CHEBI:57834"/>
    </ligand>
</feature>
<feature type="binding site" evidence="1">
    <location>
        <position position="110"/>
    </location>
    <ligand>
        <name>S-methyl-5'-thioadenosine</name>
        <dbReference type="ChEBI" id="CHEBI:17509"/>
    </ligand>
</feature>
<feature type="binding site" evidence="1">
    <location>
        <begin position="141"/>
        <end position="142"/>
    </location>
    <ligand>
        <name>S-methyl-5'-thioadenosine</name>
        <dbReference type="ChEBI" id="CHEBI:17509"/>
    </ligand>
</feature>
<feature type="binding site" evidence="1">
    <location>
        <begin position="160"/>
        <end position="163"/>
    </location>
    <ligand>
        <name>spermidine</name>
        <dbReference type="ChEBI" id="CHEBI:57834"/>
    </ligand>
</feature>
<feature type="binding site" evidence="1">
    <location>
        <position position="167"/>
    </location>
    <ligand>
        <name>S-methyl-5'-thioadenosine</name>
        <dbReference type="ChEBI" id="CHEBI:17509"/>
    </ligand>
</feature>
<proteinExistence type="inferred from homology"/>
<accession>Q3BN93</accession>
<reference key="1">
    <citation type="journal article" date="2005" name="J. Bacteriol.">
        <title>Insights into genome plasticity and pathogenicity of the plant pathogenic Bacterium Xanthomonas campestris pv. vesicatoria revealed by the complete genome sequence.</title>
        <authorList>
            <person name="Thieme F."/>
            <person name="Koebnik R."/>
            <person name="Bekel T."/>
            <person name="Berger C."/>
            <person name="Boch J."/>
            <person name="Buettner D."/>
            <person name="Caldana C."/>
            <person name="Gaigalat L."/>
            <person name="Goesmann A."/>
            <person name="Kay S."/>
            <person name="Kirchner O."/>
            <person name="Lanz C."/>
            <person name="Linke B."/>
            <person name="McHardy A.C."/>
            <person name="Meyer F."/>
            <person name="Mittenhuber G."/>
            <person name="Nies D.H."/>
            <person name="Niesbach-Kloesgen U."/>
            <person name="Patschkowski T."/>
            <person name="Rueckert C."/>
            <person name="Rupp O."/>
            <person name="Schneiker S."/>
            <person name="Schuster S.C."/>
            <person name="Vorhoelter F.J."/>
            <person name="Weber E."/>
            <person name="Puehler A."/>
            <person name="Bonas U."/>
            <person name="Bartels D."/>
            <person name="Kaiser O."/>
        </authorList>
    </citation>
    <scope>NUCLEOTIDE SEQUENCE [LARGE SCALE GENOMIC DNA]</scope>
    <source>
        <strain>85-10</strain>
    </source>
</reference>
<sequence length="285" mass="31536">MSTNDNWYIEHFQPTGSAIGFRISGKLDEVQSPFQKIEIYQTTDWGKLMLIDGAVMLTSRDNFFYHEMISHPALFTHPAPKRVVIIGGGDCGTLREVLKHPGVESATQCDIDEQVTRMSEKYFPELCDANHDARAELLFDDGVAYMANCPAGSVDIVIVDSTDPVGPAEGLFNKAFYESCFKALKDEGILVQQSESPLALLDLINEMRTEMGKAGFQSFKTLPFPQPCYPTGWWSVTMASKQANADFAFRQADAQAKGFDTLYYTAHLHTGVLVAPPFVAKALGE</sequence>
<dbReference type="EC" id="2.5.1.16" evidence="1"/>
<dbReference type="EMBL" id="AM039952">
    <property type="protein sequence ID" value="CAJ25770.1"/>
    <property type="molecule type" value="Genomic_DNA"/>
</dbReference>
<dbReference type="RefSeq" id="WP_011348868.1">
    <property type="nucleotide sequence ID" value="NZ_CP017190.1"/>
</dbReference>
<dbReference type="SMR" id="Q3BN93"/>
<dbReference type="STRING" id="456327.BJD11_02420"/>
<dbReference type="KEGG" id="xcv:XCV4039"/>
<dbReference type="eggNOG" id="COG0421">
    <property type="taxonomic scope" value="Bacteria"/>
</dbReference>
<dbReference type="HOGENOM" id="CLU_048199_0_0_6"/>
<dbReference type="UniPathway" id="UPA00248">
    <property type="reaction ID" value="UER00314"/>
</dbReference>
<dbReference type="Proteomes" id="UP000007069">
    <property type="component" value="Chromosome"/>
</dbReference>
<dbReference type="GO" id="GO:0005829">
    <property type="term" value="C:cytosol"/>
    <property type="evidence" value="ECO:0007669"/>
    <property type="project" value="TreeGrafter"/>
</dbReference>
<dbReference type="GO" id="GO:0004766">
    <property type="term" value="F:spermidine synthase activity"/>
    <property type="evidence" value="ECO:0007669"/>
    <property type="project" value="UniProtKB-UniRule"/>
</dbReference>
<dbReference type="GO" id="GO:0008295">
    <property type="term" value="P:spermidine biosynthetic process"/>
    <property type="evidence" value="ECO:0007669"/>
    <property type="project" value="UniProtKB-UniRule"/>
</dbReference>
<dbReference type="CDD" id="cd02440">
    <property type="entry name" value="AdoMet_MTases"/>
    <property type="match status" value="1"/>
</dbReference>
<dbReference type="FunFam" id="3.40.50.150:FF:000290">
    <property type="entry name" value="Polyamine aminopropyltransferase"/>
    <property type="match status" value="1"/>
</dbReference>
<dbReference type="Gene3D" id="2.30.140.10">
    <property type="entry name" value="Spermidine synthase, tetramerisation domain"/>
    <property type="match status" value="1"/>
</dbReference>
<dbReference type="Gene3D" id="3.40.50.150">
    <property type="entry name" value="Vaccinia Virus protein VP39"/>
    <property type="match status" value="1"/>
</dbReference>
<dbReference type="HAMAP" id="MF_00198">
    <property type="entry name" value="Spermidine_synth"/>
    <property type="match status" value="1"/>
</dbReference>
<dbReference type="InterPro" id="IPR030374">
    <property type="entry name" value="PABS"/>
</dbReference>
<dbReference type="InterPro" id="IPR030373">
    <property type="entry name" value="PABS_CS"/>
</dbReference>
<dbReference type="InterPro" id="IPR029063">
    <property type="entry name" value="SAM-dependent_MTases_sf"/>
</dbReference>
<dbReference type="InterPro" id="IPR001045">
    <property type="entry name" value="Spermi_synthase"/>
</dbReference>
<dbReference type="InterPro" id="IPR035246">
    <property type="entry name" value="Spermidine_synt_N"/>
</dbReference>
<dbReference type="InterPro" id="IPR037163">
    <property type="entry name" value="Spermidine_synt_N_sf"/>
</dbReference>
<dbReference type="NCBIfam" id="NF002010">
    <property type="entry name" value="PRK00811.1"/>
    <property type="match status" value="1"/>
</dbReference>
<dbReference type="NCBIfam" id="TIGR00417">
    <property type="entry name" value="speE"/>
    <property type="match status" value="1"/>
</dbReference>
<dbReference type="PANTHER" id="PTHR11558:SF11">
    <property type="entry name" value="SPERMIDINE SYNTHASE"/>
    <property type="match status" value="1"/>
</dbReference>
<dbReference type="PANTHER" id="PTHR11558">
    <property type="entry name" value="SPERMIDINE/SPERMINE SYNTHASE"/>
    <property type="match status" value="1"/>
</dbReference>
<dbReference type="Pfam" id="PF17284">
    <property type="entry name" value="Spermine_synt_N"/>
    <property type="match status" value="1"/>
</dbReference>
<dbReference type="Pfam" id="PF01564">
    <property type="entry name" value="Spermine_synth"/>
    <property type="match status" value="1"/>
</dbReference>
<dbReference type="SUPFAM" id="SSF53335">
    <property type="entry name" value="S-adenosyl-L-methionine-dependent methyltransferases"/>
    <property type="match status" value="1"/>
</dbReference>
<dbReference type="PROSITE" id="PS01330">
    <property type="entry name" value="PABS_1"/>
    <property type="match status" value="1"/>
</dbReference>
<dbReference type="PROSITE" id="PS51006">
    <property type="entry name" value="PABS_2"/>
    <property type="match status" value="1"/>
</dbReference>
<keyword id="KW-0963">Cytoplasm</keyword>
<keyword id="KW-0620">Polyamine biosynthesis</keyword>
<keyword id="KW-0745">Spermidine biosynthesis</keyword>
<keyword id="KW-0808">Transferase</keyword>
<comment type="function">
    <text evidence="1">Catalyzes the irreversible transfer of a propylamine group from the amino donor S-adenosylmethioninamine (decarboxy-AdoMet) to putrescine (1,4-diaminobutane) to yield spermidine.</text>
</comment>
<comment type="catalytic activity">
    <reaction evidence="1">
        <text>S-adenosyl 3-(methylsulfanyl)propylamine + putrescine = S-methyl-5'-thioadenosine + spermidine + H(+)</text>
        <dbReference type="Rhea" id="RHEA:12721"/>
        <dbReference type="ChEBI" id="CHEBI:15378"/>
        <dbReference type="ChEBI" id="CHEBI:17509"/>
        <dbReference type="ChEBI" id="CHEBI:57443"/>
        <dbReference type="ChEBI" id="CHEBI:57834"/>
        <dbReference type="ChEBI" id="CHEBI:326268"/>
        <dbReference type="EC" id="2.5.1.16"/>
    </reaction>
</comment>
<comment type="pathway">
    <text evidence="1">Amine and polyamine biosynthesis; spermidine biosynthesis; spermidine from putrescine: step 1/1.</text>
</comment>
<comment type="subunit">
    <text evidence="1">Homodimer or homotetramer.</text>
</comment>
<comment type="subcellular location">
    <subcellularLocation>
        <location evidence="1">Cytoplasm</location>
    </subcellularLocation>
</comment>
<comment type="similarity">
    <text evidence="1">Belongs to the spermidine/spermine synthase family.</text>
</comment>
<protein>
    <recommendedName>
        <fullName evidence="1">Polyamine aminopropyltransferase</fullName>
    </recommendedName>
    <alternativeName>
        <fullName evidence="1">Putrescine aminopropyltransferase</fullName>
        <shortName evidence="1">PAPT</shortName>
    </alternativeName>
    <alternativeName>
        <fullName evidence="1">Spermidine synthase</fullName>
        <shortName evidence="1">SPDS</shortName>
        <shortName evidence="1">SPDSY</shortName>
        <ecNumber evidence="1">2.5.1.16</ecNumber>
    </alternativeName>
</protein>